<evidence type="ECO:0000250" key="1"/>
<evidence type="ECO:0000250" key="2">
    <source>
        <dbReference type="UniProtKB" id="P61131"/>
    </source>
</evidence>
<evidence type="ECO:0000250" key="3">
    <source>
        <dbReference type="UniProtKB" id="Q11206"/>
    </source>
</evidence>
<evidence type="ECO:0000250" key="4">
    <source>
        <dbReference type="UniProtKB" id="Q91Y74"/>
    </source>
</evidence>
<evidence type="ECO:0000255" key="5"/>
<evidence type="ECO:0000305" key="6"/>
<reference key="1">
    <citation type="submission" date="2004-01" db="EMBL/GenBank/DDBJ databases">
        <title>Phylogeny of sialyltransferases.</title>
        <authorList>
            <person name="Harduin-Lepers A."/>
            <person name="Martinez-Duncker I."/>
            <person name="Mollicone R."/>
            <person name="Delannoy P."/>
            <person name="Oriol R."/>
        </authorList>
    </citation>
    <scope>NUCLEOTIDE SEQUENCE [MRNA]</scope>
</reference>
<gene>
    <name type="primary">ST3GAL4</name>
    <name type="synonym">SIAT4C</name>
</gene>
<accession>P61130</accession>
<proteinExistence type="evidence at transcript level"/>
<protein>
    <recommendedName>
        <fullName>CMP-N-acetylneuraminate-beta-galactosamide-alpha-2,3-sialyltransferase 4</fullName>
        <shortName>Alpha 2,3-ST 4</shortName>
        <shortName>Beta-galactoside alpha-2,3-sialyltransferase 4</shortName>
        <ecNumber evidence="3">2.4.3.2</ecNumber>
        <ecNumber evidence="3">2.4.3.4</ecNumber>
    </recommendedName>
    <alternativeName>
        <fullName>Alpha 2,3-sialyltransferase IV</fullName>
    </alternativeName>
    <alternativeName>
        <fullName>Gal-beta-1,3-GalNAc-alpha-2,3-sialyltransferase</fullName>
    </alternativeName>
    <alternativeName>
        <fullName>Gal-beta-1,4-GlcNAc-alpha-2,3-sialyltransferase</fullName>
    </alternativeName>
    <alternativeName>
        <fullName>N-acetyllactosaminide alpha-2,3-sialyltransferase</fullName>
        <ecNumber evidence="3">2.4.3.6</ecNumber>
    </alternativeName>
    <alternativeName>
        <fullName>ST3Gal IV</fullName>
        <shortName>ST3GalIV</shortName>
    </alternativeName>
    <alternativeName>
        <fullName>Sialyltransferase 4C</fullName>
        <shortName>SIAT4-C</shortName>
    </alternativeName>
</protein>
<keyword id="KW-1015">Disulfide bond</keyword>
<keyword id="KW-0325">Glycoprotein</keyword>
<keyword id="KW-0328">Glycosyltransferase</keyword>
<keyword id="KW-0333">Golgi apparatus</keyword>
<keyword id="KW-0443">Lipid metabolism</keyword>
<keyword id="KW-0472">Membrane</keyword>
<keyword id="KW-1185">Reference proteome</keyword>
<keyword id="KW-0964">Secreted</keyword>
<keyword id="KW-0735">Signal-anchor</keyword>
<keyword id="KW-0808">Transferase</keyword>
<keyword id="KW-0812">Transmembrane</keyword>
<keyword id="KW-1133">Transmembrane helix</keyword>
<sequence>MCPAGWKLLAMLALVLVVMVWYSISREDSFYFPIPEKKEPCLQGEAESKASKLFGNYSRDQPIFLRLEDYFWVKTPSAYELPYGTKGSEDLLLRVLAITSSSIRKNIQSLRCRRCVVVGNGHRLRNSSLGDAINKYDVVIRLNNAPVAGYEGDVGSKTTMRLFYPESAHFDPKVENNPDTLLVLVAFKAMDFHWIETILSDKKRVRKGFWKQPPLIWDVNPKQIRILNPFFMEIAADKLLSLPMQQPRKIKQKPTTGLLAITLALHLCDLVHIAGFGYPDAYNKKQTIHYYEQITLKSMAGSGHNVSQEALAIKRMLEMGAVKNLTSF</sequence>
<comment type="function">
    <text evidence="2 3 4">A beta-galactoside alpha2-3 sialyltransferase involved in terminal sialylation of glycoproteins and glycolipids. Catalyzes the transfer of sialic acid (N-acetyl-neuraminic acid; Neu5Ac) from the nucleotide sugar donor CMP-Neu5Ac onto acceptor Galbeta-(1-&gt;3)-GalNAc- and Galbeta-(1-&gt;4)-GlcNAc-terminated glycoconjugates through an alpha2-3 linkage (By similarity). Plays a major role in hemostasis. Responsible for sialylation of plasma VWF/von Willebrand factor, preventing its recognition by asialoglycoprotein receptors (ASGPR) and subsequent clearance. Regulates ASGPR-mediated clearance of platelets (By similarity). Participates in the biosynthesis of the sialyl Lewis X epitopes, both on O- and N-glycans, which are recognized by SELE/E-selectin, SELP/P-selectin and SELL/L-selectin. Essential for selectin-mediated rolling and adhesion of leukocytes during extravasation (By similarity). Contributes to adhesion and transendothelial migration of neutrophils likely through terminal sialylation of CXCR2 (By similarity). In glycosphingolipid biosynthesis, sialylates GM1 and GA1 gangliosides to form GD1a and GM1b, respectively (By similarity). Metabolizes brain c-series ganglioside GT1c forming GQ1c (By similarity). Synthesizes ganglioside LM1 (IV3Neu5Ac-nLc4Cer), a major structural component of peripheral nerve myelin (By similarity).</text>
</comment>
<comment type="catalytic activity">
    <reaction evidence="3">
        <text>a beta-D-galactosyl-(1-&gt;3)-N-acetyl-beta-D-galactosaminyl derivative + CMP-N-acetyl-beta-neuraminate = an N-acetyl-alpha-neuraminyl-(2-&gt;3)-beta-D-galactosyl-(1-&gt;3)-N-acetyl-beta-D-galactosaminyl derivative + CMP + H(+)</text>
        <dbReference type="Rhea" id="RHEA:52380"/>
        <dbReference type="ChEBI" id="CHEBI:15378"/>
        <dbReference type="ChEBI" id="CHEBI:57812"/>
        <dbReference type="ChEBI" id="CHEBI:60377"/>
        <dbReference type="ChEBI" id="CHEBI:136588"/>
        <dbReference type="ChEBI" id="CHEBI:136589"/>
        <dbReference type="EC" id="2.4.3.2"/>
    </reaction>
    <physiologicalReaction direction="left-to-right" evidence="3">
        <dbReference type="Rhea" id="RHEA:52381"/>
    </physiologicalReaction>
</comment>
<comment type="catalytic activity">
    <reaction evidence="3">
        <text>a beta-D-galactosyl-(1-&gt;3)-N-acetyl-alpha-D-galactosaminyl derivative + CMP-N-acetyl-beta-neuraminate = an N-acetyl-alpha-neuraminyl-(2-&gt;3)-beta-D-galactosyl-(1-&gt;3)-N-acetyl-alpha-D-galactosaminyl derivative + CMP + H(+)</text>
        <dbReference type="Rhea" id="RHEA:21616"/>
        <dbReference type="ChEBI" id="CHEBI:15378"/>
        <dbReference type="ChEBI" id="CHEBI:57812"/>
        <dbReference type="ChEBI" id="CHEBI:60377"/>
        <dbReference type="ChEBI" id="CHEBI:133470"/>
        <dbReference type="ChEBI" id="CHEBI:139596"/>
        <dbReference type="EC" id="2.4.3.4"/>
    </reaction>
    <physiologicalReaction direction="left-to-right" evidence="3">
        <dbReference type="Rhea" id="RHEA:21617"/>
    </physiologicalReaction>
</comment>
<comment type="catalytic activity">
    <reaction evidence="3">
        <text>a beta-D-galactosyl-(1-&gt;4)-N-acetyl-beta-D-glucosaminyl derivative + CMP-N-acetyl-beta-neuraminate = an N-acetyl-alpha-neuraminyl-(2-&gt;3)-beta-D-galactosyl-(1-&gt;4)-N-acetyl-beta-D-glucosaminyl derivative + CMP + H(+)</text>
        <dbReference type="Rhea" id="RHEA:52316"/>
        <dbReference type="ChEBI" id="CHEBI:15378"/>
        <dbReference type="ChEBI" id="CHEBI:57812"/>
        <dbReference type="ChEBI" id="CHEBI:60377"/>
        <dbReference type="ChEBI" id="CHEBI:133507"/>
        <dbReference type="ChEBI" id="CHEBI:136545"/>
        <dbReference type="EC" id="2.4.3.6"/>
    </reaction>
    <physiologicalReaction direction="left-to-right" evidence="3">
        <dbReference type="Rhea" id="RHEA:52317"/>
    </physiologicalReaction>
</comment>
<comment type="catalytic activity">
    <reaction evidence="3">
        <text>a ganglioside GM1 (d18:1(4E)) + CMP-N-acetyl-beta-neuraminate = a ganglioside GD1a (d18:1(4E)) + CMP + H(+)</text>
        <dbReference type="Rhea" id="RHEA:18021"/>
        <dbReference type="ChEBI" id="CHEBI:15378"/>
        <dbReference type="ChEBI" id="CHEBI:57812"/>
        <dbReference type="ChEBI" id="CHEBI:60377"/>
        <dbReference type="ChEBI" id="CHEBI:77709"/>
        <dbReference type="ChEBI" id="CHEBI:78445"/>
        <dbReference type="EC" id="2.4.3.2"/>
    </reaction>
    <physiologicalReaction direction="left-to-right" evidence="3">
        <dbReference type="Rhea" id="RHEA:18022"/>
    </physiologicalReaction>
</comment>
<comment type="catalytic activity">
    <reaction evidence="3">
        <text>a ganglioside GA1 (d18:1(4E)) + CMP-N-acetyl-beta-neuraminate = a ganglioside GM1b (d18:1(4E)) + CMP + H(+)</text>
        <dbReference type="Rhea" id="RHEA:47560"/>
        <dbReference type="ChEBI" id="CHEBI:15378"/>
        <dbReference type="ChEBI" id="CHEBI:27938"/>
        <dbReference type="ChEBI" id="CHEBI:57812"/>
        <dbReference type="ChEBI" id="CHEBI:60377"/>
        <dbReference type="ChEBI" id="CHEBI:78568"/>
    </reaction>
    <physiologicalReaction direction="left-to-right" evidence="3">
        <dbReference type="Rhea" id="RHEA:47561"/>
    </physiologicalReaction>
</comment>
<comment type="catalytic activity">
    <reaction evidence="2">
        <text>a ganglioside GT1c (d18:1(4E)) + CMP-N-acetyl-beta-neuraminate = a ganglioside GQ1c (d18:1(4E)) + CMP + H(+)</text>
        <dbReference type="Rhea" id="RHEA:47588"/>
        <dbReference type="ChEBI" id="CHEBI:15378"/>
        <dbReference type="ChEBI" id="CHEBI:57812"/>
        <dbReference type="ChEBI" id="CHEBI:60377"/>
        <dbReference type="ChEBI" id="CHEBI:87789"/>
        <dbReference type="ChEBI" id="CHEBI:87791"/>
    </reaction>
    <physiologicalReaction direction="left-to-right" evidence="2">
        <dbReference type="Rhea" id="RHEA:47589"/>
    </physiologicalReaction>
</comment>
<comment type="catalytic activity">
    <reaction evidence="3">
        <text>a neolactoside nLc4Cer + CMP-N-acetyl-beta-neuraminate = a neolactoside IV(3)-alpha-NeuAc-nLc4Cer + CMP + H(+)</text>
        <dbReference type="Rhea" id="RHEA:65432"/>
        <dbReference type="ChEBI" id="CHEBI:15378"/>
        <dbReference type="ChEBI" id="CHEBI:57812"/>
        <dbReference type="ChEBI" id="CHEBI:60377"/>
        <dbReference type="ChEBI" id="CHEBI:90376"/>
        <dbReference type="ChEBI" id="CHEBI:90390"/>
    </reaction>
    <physiologicalReaction direction="left-to-right" evidence="3">
        <dbReference type="Rhea" id="RHEA:65433"/>
    </physiologicalReaction>
</comment>
<comment type="catalytic activity">
    <reaction evidence="3">
        <text>a neolactoside nLc4Cer(d18:1(4E)) + CMP-N-acetyl-beta-neuraminate = a neolactoside IV(3)-alpha-NeuAc-nLc4Cer(d18:1(4E)) + CMP + H(+)</text>
        <dbReference type="Rhea" id="RHEA:18913"/>
        <dbReference type="ChEBI" id="CHEBI:15378"/>
        <dbReference type="ChEBI" id="CHEBI:17006"/>
        <dbReference type="ChEBI" id="CHEBI:57812"/>
        <dbReference type="ChEBI" id="CHEBI:58665"/>
        <dbReference type="ChEBI" id="CHEBI:60377"/>
        <dbReference type="EC" id="2.4.3.6"/>
    </reaction>
    <physiologicalReaction direction="left-to-right" evidence="3">
        <dbReference type="Rhea" id="RHEA:18914"/>
    </physiologicalReaction>
</comment>
<comment type="pathway">
    <text evidence="3">Protein modification; protein glycosylation.</text>
</comment>
<comment type="pathway">
    <text evidence="3">Glycolipid biosynthesis.</text>
</comment>
<comment type="subcellular location">
    <subcellularLocation>
        <location evidence="1">Golgi apparatus</location>
        <location evidence="1">Golgi stack membrane</location>
        <topology evidence="1">Single-pass type II membrane protein</topology>
    </subcellularLocation>
    <subcellularLocation>
        <location evidence="1">Secreted</location>
    </subcellularLocation>
    <text evidence="1">Membrane-bound form in trans cisternae of Golgi. Secreted into the body fluid.</text>
</comment>
<comment type="PTM">
    <text evidence="1">The soluble form derives from the membrane form by proteolytic processing.</text>
</comment>
<comment type="similarity">
    <text evidence="6">Belongs to the glycosyltransferase 29 family.</text>
</comment>
<dbReference type="EC" id="2.4.3.2" evidence="3"/>
<dbReference type="EC" id="2.4.3.4" evidence="3"/>
<dbReference type="EC" id="2.4.3.6" evidence="3"/>
<dbReference type="EMBL" id="AJ626824">
    <property type="protein sequence ID" value="CAF25182.1"/>
    <property type="molecule type" value="mRNA"/>
</dbReference>
<dbReference type="RefSeq" id="NP_001032390.1">
    <property type="nucleotide sequence ID" value="NM_001037313.1"/>
</dbReference>
<dbReference type="SMR" id="P61130"/>
<dbReference type="STRING" id="9598.ENSPTRP00000007620"/>
<dbReference type="CAZy" id="GT29">
    <property type="family name" value="Glycosyltransferase Family 29"/>
</dbReference>
<dbReference type="GlyCosmos" id="P61130">
    <property type="glycosylation" value="4 sites, No reported glycans"/>
</dbReference>
<dbReference type="PaxDb" id="9598-ENSPTRP00000007620"/>
<dbReference type="GeneID" id="466845"/>
<dbReference type="KEGG" id="ptr:466845"/>
<dbReference type="CTD" id="6484"/>
<dbReference type="eggNOG" id="KOG2692">
    <property type="taxonomic scope" value="Eukaryota"/>
</dbReference>
<dbReference type="InParanoid" id="P61130"/>
<dbReference type="UniPathway" id="UPA00378"/>
<dbReference type="Proteomes" id="UP000002277">
    <property type="component" value="Unplaced"/>
</dbReference>
<dbReference type="GO" id="GO:0005576">
    <property type="term" value="C:extracellular region"/>
    <property type="evidence" value="ECO:0007669"/>
    <property type="project" value="UniProtKB-SubCell"/>
</dbReference>
<dbReference type="GO" id="GO:0032580">
    <property type="term" value="C:Golgi cisterna membrane"/>
    <property type="evidence" value="ECO:0007669"/>
    <property type="project" value="UniProtKB-SubCell"/>
</dbReference>
<dbReference type="GO" id="GO:0047288">
    <property type="term" value="F:beta-D-galactosyl-(1-&gt;3)-N-acetyl-beta-D-galactosaminide alpha-2,3- sialyltransferase"/>
    <property type="evidence" value="ECO:0000318"/>
    <property type="project" value="GO_Central"/>
</dbReference>
<dbReference type="GO" id="GO:0003836">
    <property type="term" value="F:beta-galactoside (CMP) alpha-2,3-sialyltransferase activity"/>
    <property type="evidence" value="ECO:0000318"/>
    <property type="project" value="GO_Central"/>
</dbReference>
<dbReference type="GO" id="GO:0008118">
    <property type="term" value="F:N-acetyllactosaminide alpha-2,3-sialyltransferase activity"/>
    <property type="evidence" value="ECO:0000250"/>
    <property type="project" value="UniProtKB"/>
</dbReference>
<dbReference type="GO" id="GO:0009247">
    <property type="term" value="P:glycolipid biosynthetic process"/>
    <property type="evidence" value="ECO:0000318"/>
    <property type="project" value="GO_Central"/>
</dbReference>
<dbReference type="GO" id="GO:0030194">
    <property type="term" value="P:positive regulation of blood coagulation"/>
    <property type="evidence" value="ECO:0000250"/>
    <property type="project" value="UniProtKB"/>
</dbReference>
<dbReference type="GO" id="GO:1903238">
    <property type="term" value="P:positive regulation of leukocyte tethering or rolling"/>
    <property type="evidence" value="ECO:0000250"/>
    <property type="project" value="UniProtKB"/>
</dbReference>
<dbReference type="GO" id="GO:0006486">
    <property type="term" value="P:protein glycosylation"/>
    <property type="evidence" value="ECO:0000318"/>
    <property type="project" value="GO_Central"/>
</dbReference>
<dbReference type="CDD" id="cd23982">
    <property type="entry name" value="GT29_ST3GAL4"/>
    <property type="match status" value="1"/>
</dbReference>
<dbReference type="FunFam" id="3.90.1480.20:FF:000005">
    <property type="entry name" value="ST3 beta-galactoside alpha-2,3-sialyltransferase 4"/>
    <property type="match status" value="1"/>
</dbReference>
<dbReference type="Gene3D" id="3.90.1480.20">
    <property type="entry name" value="Glycosyl transferase family 29"/>
    <property type="match status" value="1"/>
</dbReference>
<dbReference type="InterPro" id="IPR001675">
    <property type="entry name" value="Glyco_trans_29"/>
</dbReference>
<dbReference type="InterPro" id="IPR051142">
    <property type="entry name" value="Glycosyltransferase_29"/>
</dbReference>
<dbReference type="InterPro" id="IPR038578">
    <property type="entry name" value="GT29-like_sf"/>
</dbReference>
<dbReference type="InterPro" id="IPR012163">
    <property type="entry name" value="Sialyl_trans"/>
</dbReference>
<dbReference type="PANTHER" id="PTHR13713:SF57">
    <property type="entry name" value="CMP-N-ACETYLNEURAMINATE-BETA-GALACTOSAMIDE-ALPHA-2,3-SIALYLTRANSFERASE 4"/>
    <property type="match status" value="1"/>
</dbReference>
<dbReference type="PANTHER" id="PTHR13713">
    <property type="entry name" value="SIALYLTRANSFERASE"/>
    <property type="match status" value="1"/>
</dbReference>
<dbReference type="Pfam" id="PF00777">
    <property type="entry name" value="Glyco_transf_29"/>
    <property type="match status" value="1"/>
</dbReference>
<dbReference type="PIRSF" id="PIRSF005557">
    <property type="entry name" value="Sialyl_trans"/>
    <property type="match status" value="1"/>
</dbReference>
<feature type="chain" id="PRO_0000149264" description="CMP-N-acetylneuraminate-beta-galactosamide-alpha-2,3-sialyltransferase 4">
    <location>
        <begin position="1"/>
        <end position="328"/>
    </location>
</feature>
<feature type="topological domain" description="Cytoplasmic" evidence="5">
    <location>
        <begin position="1"/>
        <end position="7"/>
    </location>
</feature>
<feature type="transmembrane region" description="Helical; Signal-anchor for type II membrane protein" evidence="5">
    <location>
        <begin position="8"/>
        <end position="25"/>
    </location>
</feature>
<feature type="topological domain" description="Lumenal" evidence="5">
    <location>
        <begin position="26"/>
        <end position="328"/>
    </location>
</feature>
<feature type="glycosylation site" description="N-linked (GlcNAc...) asparagine" evidence="5">
    <location>
        <position position="56"/>
    </location>
</feature>
<feature type="glycosylation site" description="N-linked (GlcNAc...) asparagine" evidence="5">
    <location>
        <position position="126"/>
    </location>
</feature>
<feature type="glycosylation site" description="N-linked (GlcNAc...) asparagine" evidence="5">
    <location>
        <position position="305"/>
    </location>
</feature>
<feature type="glycosylation site" description="N-linked (GlcNAc...) asparagine" evidence="5">
    <location>
        <position position="324"/>
    </location>
</feature>
<feature type="disulfide bond" evidence="1">
    <location>
        <begin position="115"/>
        <end position="268"/>
    </location>
</feature>
<organism>
    <name type="scientific">Pan troglodytes</name>
    <name type="common">Chimpanzee</name>
    <dbReference type="NCBI Taxonomy" id="9598"/>
    <lineage>
        <taxon>Eukaryota</taxon>
        <taxon>Metazoa</taxon>
        <taxon>Chordata</taxon>
        <taxon>Craniata</taxon>
        <taxon>Vertebrata</taxon>
        <taxon>Euteleostomi</taxon>
        <taxon>Mammalia</taxon>
        <taxon>Eutheria</taxon>
        <taxon>Euarchontoglires</taxon>
        <taxon>Primates</taxon>
        <taxon>Haplorrhini</taxon>
        <taxon>Catarrhini</taxon>
        <taxon>Hominidae</taxon>
        <taxon>Pan</taxon>
    </lineage>
</organism>
<name>SIA4C_PANTR</name>